<comment type="function">
    <text evidence="1">Inhibits voltage-gated potassium channel currents in DRG neurons. 200 nM of the toxin inhibits current amplitude by only 25% and even at concentrations up to 5 uM, the toxin does not inhibit all potassium currents. In vivo, insects injected with this toxin showed signs of neurotoxicity including twitching, paralysis, and body contraction.</text>
</comment>
<comment type="subcellular location">
    <subcellularLocation>
        <location evidence="1">Secreted</location>
    </subcellularLocation>
</comment>
<comment type="tissue specificity">
    <text evidence="5">Expressed by the venom gland.</text>
</comment>
<comment type="PTM">
    <text evidence="4">Contains 2 disulfide bonds.</text>
</comment>
<comment type="mass spectrometry" mass="7989.05" method="MALDI" evidence="1"/>
<comment type="toxic dose">
    <text evidence="1">the LD(50) ranges from 0.040 mg/kg in adult blowflies to 24.1 mg/kg in mealworms.</text>
</comment>
<comment type="similarity">
    <text evidence="4">Belongs to the scoloptoxin-11 family.</text>
</comment>
<reference key="1">
    <citation type="journal article" date="2012" name="Mol. Cell. Proteomics">
        <title>Chemical punch packed in venoms makes centipedes excellent predators.</title>
        <authorList>
            <person name="Yang S."/>
            <person name="Liu Z."/>
            <person name="Xiao Y."/>
            <person name="Li Y."/>
            <person name="Rong M."/>
            <person name="Liang S."/>
            <person name="Zhang Z."/>
            <person name="Yu H."/>
            <person name="King G.F."/>
            <person name="Lai R."/>
        </authorList>
    </citation>
    <scope>NUCLEOTIDE SEQUENCE [MRNA]</scope>
    <scope>PROTEIN SEQUENCE OF 17-84</scope>
    <scope>FUNCTION</scope>
    <scope>BIOASSAY</scope>
    <scope>TOXIC DOSE</scope>
    <scope>DISULFIDE BONDS</scope>
    <scope>MASS SPECTROMETRY</scope>
    <scope>SUBCELLULAR LOCATION</scope>
    <source>
        <tissue>Venom</tissue>
        <tissue>Venom gland</tissue>
    </source>
</reference>
<reference key="2">
    <citation type="journal article" date="2014" name="Mol. Biol. Evol.">
        <title>Clawing through evolution: toxin diversification and convergence in the ancient lineage Chilopoda (centipedes).</title>
        <authorList>
            <person name="Undheim E.A."/>
            <person name="Jones A."/>
            <person name="Clauser K.R."/>
            <person name="Holland J.W."/>
            <person name="Pineda S.S."/>
            <person name="King G.F."/>
            <person name="Fry B.G."/>
        </authorList>
    </citation>
    <scope>NOMENCLATURE</scope>
</reference>
<evidence type="ECO:0000269" key="1">
    <source>
    </source>
</evidence>
<evidence type="ECO:0000303" key="2">
    <source>
    </source>
</evidence>
<evidence type="ECO:0000303" key="3">
    <source>
    </source>
</evidence>
<evidence type="ECO:0000305" key="4"/>
<evidence type="ECO:0000305" key="5">
    <source>
    </source>
</evidence>
<protein>
    <recommendedName>
        <fullName evidence="3">Kappa-scoloptoxin(11)-Ssm3a</fullName>
        <shortName evidence="3">Kappa-SLPTX(11)-Ssm3a</shortName>
    </recommendedName>
    <alternativeName>
        <fullName evidence="2">Kappa-scoloptoxin-Ssm3a</fullName>
        <shortName evidence="2">Kappa-SLPTX-Ssm3a</shortName>
    </alternativeName>
</protein>
<dbReference type="EMBL" id="JN646116">
    <property type="protein sequence ID" value="AFM55005.1"/>
    <property type="molecule type" value="mRNA"/>
</dbReference>
<dbReference type="GO" id="GO:0005576">
    <property type="term" value="C:extracellular region"/>
    <property type="evidence" value="ECO:0007669"/>
    <property type="project" value="UniProtKB-SubCell"/>
</dbReference>
<dbReference type="GO" id="GO:0015459">
    <property type="term" value="F:potassium channel regulator activity"/>
    <property type="evidence" value="ECO:0007669"/>
    <property type="project" value="UniProtKB-KW"/>
</dbReference>
<dbReference type="GO" id="GO:0090729">
    <property type="term" value="F:toxin activity"/>
    <property type="evidence" value="ECO:0007669"/>
    <property type="project" value="UniProtKB-KW"/>
</dbReference>
<proteinExistence type="evidence at protein level"/>
<name>TXB3A_SCOMU</name>
<keyword id="KW-0903">Direct protein sequencing</keyword>
<keyword id="KW-1015">Disulfide bond</keyword>
<keyword id="KW-0872">Ion channel impairing toxin</keyword>
<keyword id="KW-0528">Neurotoxin</keyword>
<keyword id="KW-0632">Potassium channel impairing toxin</keyword>
<keyword id="KW-0964">Secreted</keyword>
<keyword id="KW-0732">Signal</keyword>
<keyword id="KW-0800">Toxin</keyword>
<keyword id="KW-1220">Voltage-gated potassium channel impairing toxin</keyword>
<sequence length="84" mass="9869">MSWMFYSFIVFTLAIKEVIAIDGLEICSNDQLHVTIYSIFSPLFDKPKLNYYFNCSCPGSIYISDVYPKYFNDIAHIEYRCKLT</sequence>
<accession>I6S7G5</accession>
<organism>
    <name type="scientific">Scolopendra mutilans</name>
    <name type="common">Chinese red-headed centipede</name>
    <name type="synonym">Scolopendra subspinipes mutilans</name>
    <dbReference type="NCBI Taxonomy" id="2836329"/>
    <lineage>
        <taxon>Eukaryota</taxon>
        <taxon>Metazoa</taxon>
        <taxon>Ecdysozoa</taxon>
        <taxon>Arthropoda</taxon>
        <taxon>Myriapoda</taxon>
        <taxon>Chilopoda</taxon>
        <taxon>Pleurostigmophora</taxon>
        <taxon>Scolopendromorpha</taxon>
        <taxon>Scolopendridae</taxon>
        <taxon>Scolopendra</taxon>
    </lineage>
</organism>
<feature type="signal peptide" evidence="1">
    <location>
        <begin position="1"/>
        <end position="16"/>
    </location>
</feature>
<feature type="chain" id="PRO_0000425485" description="Kappa-scoloptoxin(11)-Ssm3a" evidence="1">
    <location>
        <begin position="17"/>
        <end position="84"/>
    </location>
</feature>